<organism>
    <name type="scientific">Mycobacterium ulcerans (strain Agy99)</name>
    <dbReference type="NCBI Taxonomy" id="362242"/>
    <lineage>
        <taxon>Bacteria</taxon>
        <taxon>Bacillati</taxon>
        <taxon>Actinomycetota</taxon>
        <taxon>Actinomycetes</taxon>
        <taxon>Mycobacteriales</taxon>
        <taxon>Mycobacteriaceae</taxon>
        <taxon>Mycobacterium</taxon>
        <taxon>Mycobacterium ulcerans group</taxon>
    </lineage>
</organism>
<keyword id="KW-0963">Cytoplasm</keyword>
<keyword id="KW-0488">Methylation</keyword>
<keyword id="KW-0648">Protein biosynthesis</keyword>
<accession>A0PQZ6</accession>
<dbReference type="EMBL" id="CP000325">
    <property type="protein sequence ID" value="ABL04765.1"/>
    <property type="molecule type" value="Genomic_DNA"/>
</dbReference>
<dbReference type="RefSeq" id="WP_011740380.1">
    <property type="nucleotide sequence ID" value="NC_008611.1"/>
</dbReference>
<dbReference type="SMR" id="A0PQZ6"/>
<dbReference type="KEGG" id="mul:MUL_2412"/>
<dbReference type="eggNOG" id="COG0216">
    <property type="taxonomic scope" value="Bacteria"/>
</dbReference>
<dbReference type="HOGENOM" id="CLU_036856_6_0_11"/>
<dbReference type="Proteomes" id="UP000000765">
    <property type="component" value="Chromosome"/>
</dbReference>
<dbReference type="GO" id="GO:0005737">
    <property type="term" value="C:cytoplasm"/>
    <property type="evidence" value="ECO:0007669"/>
    <property type="project" value="UniProtKB-SubCell"/>
</dbReference>
<dbReference type="GO" id="GO:0016149">
    <property type="term" value="F:translation release factor activity, codon specific"/>
    <property type="evidence" value="ECO:0007669"/>
    <property type="project" value="UniProtKB-UniRule"/>
</dbReference>
<dbReference type="FunFam" id="3.30.160.20:FF:000010">
    <property type="entry name" value="Peptide chain release factor 2"/>
    <property type="match status" value="1"/>
</dbReference>
<dbReference type="Gene3D" id="3.30.160.20">
    <property type="match status" value="1"/>
</dbReference>
<dbReference type="Gene3D" id="3.30.70.1660">
    <property type="match status" value="1"/>
</dbReference>
<dbReference type="Gene3D" id="1.20.58.410">
    <property type="entry name" value="Release factor"/>
    <property type="match status" value="1"/>
</dbReference>
<dbReference type="HAMAP" id="MF_00094">
    <property type="entry name" value="Rel_fac_2"/>
    <property type="match status" value="1"/>
</dbReference>
<dbReference type="InterPro" id="IPR005139">
    <property type="entry name" value="PCRF"/>
</dbReference>
<dbReference type="InterPro" id="IPR000352">
    <property type="entry name" value="Pep_chain_release_fac_I"/>
</dbReference>
<dbReference type="InterPro" id="IPR045853">
    <property type="entry name" value="Pep_chain_release_fac_I_sf"/>
</dbReference>
<dbReference type="InterPro" id="IPR004374">
    <property type="entry name" value="PrfB"/>
</dbReference>
<dbReference type="NCBIfam" id="TIGR00020">
    <property type="entry name" value="prfB"/>
    <property type="match status" value="1"/>
</dbReference>
<dbReference type="PANTHER" id="PTHR43116:SF3">
    <property type="entry name" value="CLASS I PEPTIDE CHAIN RELEASE FACTOR"/>
    <property type="match status" value="1"/>
</dbReference>
<dbReference type="PANTHER" id="PTHR43116">
    <property type="entry name" value="PEPTIDE CHAIN RELEASE FACTOR 2"/>
    <property type="match status" value="1"/>
</dbReference>
<dbReference type="Pfam" id="PF03462">
    <property type="entry name" value="PCRF"/>
    <property type="match status" value="1"/>
</dbReference>
<dbReference type="Pfam" id="PF00472">
    <property type="entry name" value="RF-1"/>
    <property type="match status" value="1"/>
</dbReference>
<dbReference type="SMART" id="SM00937">
    <property type="entry name" value="PCRF"/>
    <property type="match status" value="1"/>
</dbReference>
<dbReference type="SUPFAM" id="SSF75620">
    <property type="entry name" value="Release factor"/>
    <property type="match status" value="1"/>
</dbReference>
<dbReference type="PROSITE" id="PS00745">
    <property type="entry name" value="RF_PROK_I"/>
    <property type="match status" value="1"/>
</dbReference>
<name>RF2_MYCUA</name>
<reference key="1">
    <citation type="journal article" date="2007" name="Genome Res.">
        <title>Reductive evolution and niche adaptation inferred from the genome of Mycobacterium ulcerans, the causative agent of Buruli ulcer.</title>
        <authorList>
            <person name="Stinear T.P."/>
            <person name="Seemann T."/>
            <person name="Pidot S."/>
            <person name="Frigui W."/>
            <person name="Reysset G."/>
            <person name="Garnier T."/>
            <person name="Meurice G."/>
            <person name="Simon D."/>
            <person name="Bouchier C."/>
            <person name="Ma L."/>
            <person name="Tichit M."/>
            <person name="Porter J.L."/>
            <person name="Ryan J."/>
            <person name="Johnson P.D.R."/>
            <person name="Davies J.K."/>
            <person name="Jenkin G.A."/>
            <person name="Small P.L.C."/>
            <person name="Jones L.M."/>
            <person name="Tekaia F."/>
            <person name="Laval F."/>
            <person name="Daffe M."/>
            <person name="Parkhill J."/>
            <person name="Cole S.T."/>
        </authorList>
    </citation>
    <scope>NUCLEOTIDE SEQUENCE [LARGE SCALE GENOMIC DNA]</scope>
    <source>
        <strain>Agy99</strain>
    </source>
</reference>
<proteinExistence type="inferred from homology"/>
<sequence length="371" mass="41555">MEPDRQAEIAALDSALTTVERVLDVEGLRSRIEKLEHEASDPKLWDDQTRAQRVTSELSHTQGELRRVEELRRRLEDLPVLYELAAEEEGAAAGEALTEADAEFKALRADIEATEVRTLLSGEYDEREALVTIRSGAGGVDAADWAEMLMRMYVRWAEQHKYPVEVFDTSYAEEAGIKSATFAVHAPFAYGTLSVEQGTHRLVRISPFDNQSRRQTSFAEVEVLPVVETTDHIDIPEGDVRVDVYRSSGPGGQSVNTTDSAVRLTHIPTGIVVTCQNEKSQLQNKVAAMRVLQAKLLERKRIEERAELDALKGDGGSSWGNQMRSYVLHPYQMVKDLRTEYEVGNPATVLDGDIDGFLEAGIRWRNRKDDD</sequence>
<protein>
    <recommendedName>
        <fullName evidence="1">Peptide chain release factor 2</fullName>
        <shortName evidence="1">RF-2</shortName>
    </recommendedName>
</protein>
<comment type="function">
    <text evidence="1">Peptide chain release factor 2 directs the termination of translation in response to the peptide chain termination codons UGA and UAA.</text>
</comment>
<comment type="subcellular location">
    <subcellularLocation>
        <location evidence="1">Cytoplasm</location>
    </subcellularLocation>
</comment>
<comment type="PTM">
    <text evidence="1">Methylated by PrmC. Methylation increases the termination efficiency of RF2.</text>
</comment>
<comment type="similarity">
    <text evidence="1">Belongs to the prokaryotic/mitochondrial release factor family.</text>
</comment>
<evidence type="ECO:0000255" key="1">
    <source>
        <dbReference type="HAMAP-Rule" id="MF_00094"/>
    </source>
</evidence>
<feature type="chain" id="PRO_1000005003" description="Peptide chain release factor 2">
    <location>
        <begin position="1"/>
        <end position="371"/>
    </location>
</feature>
<feature type="modified residue" description="N5-methylglutamine" evidence="1">
    <location>
        <position position="253"/>
    </location>
</feature>
<gene>
    <name evidence="1" type="primary">prfB</name>
    <name type="ordered locus">MUL_2412</name>
</gene>